<dbReference type="EMBL" id="AM260525">
    <property type="protein sequence ID" value="CAK00731.1"/>
    <property type="molecule type" value="Genomic_DNA"/>
</dbReference>
<dbReference type="RefSeq" id="WP_012230664.1">
    <property type="nucleotide sequence ID" value="NC_010161.1"/>
</dbReference>
<dbReference type="SMR" id="A9IMY0"/>
<dbReference type="KEGG" id="btr:BT_0257"/>
<dbReference type="eggNOG" id="COG0718">
    <property type="taxonomic scope" value="Bacteria"/>
</dbReference>
<dbReference type="HOGENOM" id="CLU_140930_0_1_5"/>
<dbReference type="Proteomes" id="UP000001592">
    <property type="component" value="Chromosome"/>
</dbReference>
<dbReference type="GO" id="GO:0043590">
    <property type="term" value="C:bacterial nucleoid"/>
    <property type="evidence" value="ECO:0007669"/>
    <property type="project" value="UniProtKB-UniRule"/>
</dbReference>
<dbReference type="GO" id="GO:0005829">
    <property type="term" value="C:cytosol"/>
    <property type="evidence" value="ECO:0007669"/>
    <property type="project" value="TreeGrafter"/>
</dbReference>
<dbReference type="GO" id="GO:0003677">
    <property type="term" value="F:DNA binding"/>
    <property type="evidence" value="ECO:0007669"/>
    <property type="project" value="UniProtKB-UniRule"/>
</dbReference>
<dbReference type="Gene3D" id="3.30.1310.10">
    <property type="entry name" value="Nucleoid-associated protein YbaB-like domain"/>
    <property type="match status" value="1"/>
</dbReference>
<dbReference type="HAMAP" id="MF_00274">
    <property type="entry name" value="DNA_YbaB_EbfC"/>
    <property type="match status" value="1"/>
</dbReference>
<dbReference type="InterPro" id="IPR036894">
    <property type="entry name" value="YbaB-like_sf"/>
</dbReference>
<dbReference type="InterPro" id="IPR004401">
    <property type="entry name" value="YbaB/EbfC"/>
</dbReference>
<dbReference type="NCBIfam" id="TIGR00103">
    <property type="entry name" value="DNA_YbaB_EbfC"/>
    <property type="match status" value="1"/>
</dbReference>
<dbReference type="PANTHER" id="PTHR33449">
    <property type="entry name" value="NUCLEOID-ASSOCIATED PROTEIN YBAB"/>
    <property type="match status" value="1"/>
</dbReference>
<dbReference type="PANTHER" id="PTHR33449:SF1">
    <property type="entry name" value="NUCLEOID-ASSOCIATED PROTEIN YBAB"/>
    <property type="match status" value="1"/>
</dbReference>
<dbReference type="Pfam" id="PF02575">
    <property type="entry name" value="YbaB_DNA_bd"/>
    <property type="match status" value="1"/>
</dbReference>
<dbReference type="PIRSF" id="PIRSF004555">
    <property type="entry name" value="UCP004555"/>
    <property type="match status" value="1"/>
</dbReference>
<dbReference type="SUPFAM" id="SSF82607">
    <property type="entry name" value="YbaB-like"/>
    <property type="match status" value="1"/>
</dbReference>
<name>Y257_BART1</name>
<organism>
    <name type="scientific">Bartonella tribocorum (strain CIP 105476 / IBS 506)</name>
    <dbReference type="NCBI Taxonomy" id="382640"/>
    <lineage>
        <taxon>Bacteria</taxon>
        <taxon>Pseudomonadati</taxon>
        <taxon>Pseudomonadota</taxon>
        <taxon>Alphaproteobacteria</taxon>
        <taxon>Hyphomicrobiales</taxon>
        <taxon>Bartonellaceae</taxon>
        <taxon>Bartonella</taxon>
    </lineage>
</organism>
<reference key="1">
    <citation type="journal article" date="2007" name="Nat. Genet.">
        <title>Genomic analysis of Bartonella identifies type IV secretion systems as host adaptability factors.</title>
        <authorList>
            <person name="Saenz H.L."/>
            <person name="Engel P."/>
            <person name="Stoeckli M.C."/>
            <person name="Lanz C."/>
            <person name="Raddatz G."/>
            <person name="Vayssier-Taussat M."/>
            <person name="Birtles R."/>
            <person name="Schuster S.C."/>
            <person name="Dehio C."/>
        </authorList>
    </citation>
    <scope>NUCLEOTIDE SEQUENCE [LARGE SCALE GENOMIC DNA]</scope>
    <source>
        <strain>CIP 105476 / IBS 506</strain>
    </source>
</reference>
<sequence length="107" mass="11844">MREMMSMMKKAKEMQERMQKIQEEMANLQATGTAGGDLVSITLNGKNIITAIQIDPSLLKPEEAEILEDLIMAAYNEARAKIDNALEEKTKSMTAGLPLPSGFKLPF</sequence>
<feature type="chain" id="PRO_1000078747" description="Nucleoid-associated protein BT_0257">
    <location>
        <begin position="1"/>
        <end position="107"/>
    </location>
</feature>
<accession>A9IMY0</accession>
<protein>
    <recommendedName>
        <fullName evidence="1">Nucleoid-associated protein BT_0257</fullName>
    </recommendedName>
</protein>
<proteinExistence type="inferred from homology"/>
<evidence type="ECO:0000255" key="1">
    <source>
        <dbReference type="HAMAP-Rule" id="MF_00274"/>
    </source>
</evidence>
<comment type="function">
    <text evidence="1">Binds to DNA and alters its conformation. May be involved in regulation of gene expression, nucleoid organization and DNA protection.</text>
</comment>
<comment type="subunit">
    <text evidence="1">Homodimer.</text>
</comment>
<comment type="subcellular location">
    <subcellularLocation>
        <location evidence="1">Cytoplasm</location>
        <location evidence="1">Nucleoid</location>
    </subcellularLocation>
</comment>
<comment type="similarity">
    <text evidence="1">Belongs to the YbaB/EbfC family.</text>
</comment>
<keyword id="KW-0963">Cytoplasm</keyword>
<keyword id="KW-0238">DNA-binding</keyword>
<gene>
    <name type="ordered locus">BT_0257</name>
</gene>